<gene>
    <name type="ordered locus">A284L</name>
</gene>
<organismHost>
    <name type="scientific">Chlorella</name>
    <dbReference type="NCBI Taxonomy" id="3071"/>
</organismHost>
<dbReference type="EMBL" id="JF411744">
    <property type="protein sequence ID" value="AAC96652.1"/>
    <property type="molecule type" value="Genomic_DNA"/>
</dbReference>
<dbReference type="PIR" id="T17781">
    <property type="entry name" value="T17781"/>
</dbReference>
<dbReference type="RefSeq" id="NP_048638.1">
    <property type="nucleotide sequence ID" value="NC_000852.5"/>
</dbReference>
<dbReference type="SMR" id="P54966"/>
<dbReference type="GeneID" id="918312"/>
<dbReference type="KEGG" id="vg:918312"/>
<dbReference type="OrthoDB" id="8178at10239"/>
<dbReference type="Proteomes" id="UP000000862">
    <property type="component" value="Genome"/>
</dbReference>
<dbReference type="GO" id="GO:0016787">
    <property type="term" value="F:hydrolase activity"/>
    <property type="evidence" value="ECO:0007669"/>
    <property type="project" value="UniProtKB-KW"/>
</dbReference>
<dbReference type="Gene3D" id="3.60.60.10">
    <property type="entry name" value="Penicillin V Acylase, Chain A"/>
    <property type="match status" value="1"/>
</dbReference>
<dbReference type="InterPro" id="IPR029132">
    <property type="entry name" value="CBAH/NAAA_C"/>
</dbReference>
<dbReference type="InterPro" id="IPR029055">
    <property type="entry name" value="Ntn_hydrolases_N"/>
</dbReference>
<dbReference type="InterPro" id="IPR052193">
    <property type="entry name" value="Peptidase_C59"/>
</dbReference>
<dbReference type="PANTHER" id="PTHR35527">
    <property type="entry name" value="CHOLOYLGLYCINE HYDROLASE"/>
    <property type="match status" value="1"/>
</dbReference>
<dbReference type="PANTHER" id="PTHR35527:SF2">
    <property type="entry name" value="HYDROLASE"/>
    <property type="match status" value="1"/>
</dbReference>
<dbReference type="Pfam" id="PF02275">
    <property type="entry name" value="CBAH"/>
    <property type="match status" value="1"/>
</dbReference>
<dbReference type="SUPFAM" id="SSF56235">
    <property type="entry name" value="N-terminal nucleophile aminohydrolases (Ntn hydrolases)"/>
    <property type="match status" value="1"/>
</dbReference>
<sequence>MCSGLRIIADDGTVVVGRTLEFGENILKFKKFVNGNIRGISTPDGKLLDGMNEHGLVIFVFYFKNYAKYGCPSQTKLNIKPTEVALFLLQKAKNVKDVKAIAKTLNVIHESYPPFTETPPMHWLVTDASGKSIVLEPLGNGELTVFDNPMGIFTNAPTFPEHMESAKKALEHLSPISDPNAASQGTGALGLPGDFSSASRFIRLAFFSQTIEIPRTSAGAVNTLFHVLNNFDIPKGVVASINMNTGKHVYEKTIYTVIYNIKSKEIVFKHYNDQNIQKL</sequence>
<organism>
    <name type="scientific">Paramecium bursaria Chlorella virus 1</name>
    <name type="common">PBCV-1</name>
    <dbReference type="NCBI Taxonomy" id="10506"/>
    <lineage>
        <taxon>Viruses</taxon>
        <taxon>Varidnaviria</taxon>
        <taxon>Bamfordvirae</taxon>
        <taxon>Nucleocytoviricota</taxon>
        <taxon>Megaviricetes</taxon>
        <taxon>Algavirales</taxon>
        <taxon>Phycodnaviridae</taxon>
        <taxon>Chlorovirus</taxon>
    </lineage>
</organism>
<keyword id="KW-0378">Hydrolase</keyword>
<keyword id="KW-1185">Reference proteome</keyword>
<protein>
    <recommendedName>
        <fullName>Uncharacterized protein A284L</fullName>
    </recommendedName>
</protein>
<name>Y284L_PBCV1</name>
<reference key="1">
    <citation type="journal article" date="1995" name="Virology">
        <title>Analysis of 45 kb of DNA located at the left end of the chlorella virus PBCV-1 genome.</title>
        <authorList>
            <person name="Lu Z."/>
            <person name="Li Y."/>
            <person name="Zhang Y."/>
            <person name="Kutish G.F."/>
            <person name="Rock D.L."/>
            <person name="van Etten J.L."/>
        </authorList>
    </citation>
    <scope>NUCLEOTIDE SEQUENCE [LARGE SCALE GENOMIC DNA]</scope>
</reference>
<proteinExistence type="inferred from homology"/>
<evidence type="ECO:0000305" key="1"/>
<comment type="similarity">
    <text evidence="1">Belongs to the peptidase C59 family.</text>
</comment>
<feature type="chain" id="PRO_0000073022" description="Uncharacterized protein A284L">
    <location>
        <begin position="1"/>
        <end position="279"/>
    </location>
</feature>
<accession>P54966</accession>